<protein>
    <recommendedName>
        <fullName evidence="1">Large ribosomal subunit protein uL24</fullName>
    </recommendedName>
    <alternativeName>
        <fullName evidence="2">50S ribosomal protein L24</fullName>
    </alternativeName>
</protein>
<evidence type="ECO:0000255" key="1">
    <source>
        <dbReference type="HAMAP-Rule" id="MF_01326"/>
    </source>
</evidence>
<evidence type="ECO:0000305" key="2"/>
<organism>
    <name type="scientific">Nostoc punctiforme (strain ATCC 29133 / PCC 73102)</name>
    <dbReference type="NCBI Taxonomy" id="63737"/>
    <lineage>
        <taxon>Bacteria</taxon>
        <taxon>Bacillati</taxon>
        <taxon>Cyanobacteriota</taxon>
        <taxon>Cyanophyceae</taxon>
        <taxon>Nostocales</taxon>
        <taxon>Nostocaceae</taxon>
        <taxon>Nostoc</taxon>
    </lineage>
</organism>
<comment type="function">
    <text evidence="1">One of two assembly initiator proteins, it binds directly to the 5'-end of the 23S rRNA, where it nucleates assembly of the 50S subunit.</text>
</comment>
<comment type="function">
    <text evidence="1">One of the proteins that surrounds the polypeptide exit tunnel on the outside of the subunit.</text>
</comment>
<comment type="subunit">
    <text evidence="1">Part of the 50S ribosomal subunit.</text>
</comment>
<comment type="similarity">
    <text evidence="1">Belongs to the universal ribosomal protein uL24 family.</text>
</comment>
<dbReference type="EMBL" id="CP001037">
    <property type="protein sequence ID" value="ACC82752.1"/>
    <property type="molecule type" value="Genomic_DNA"/>
</dbReference>
<dbReference type="RefSeq" id="WP_012410714.1">
    <property type="nucleotide sequence ID" value="NC_010628.1"/>
</dbReference>
<dbReference type="SMR" id="B2ITP4"/>
<dbReference type="STRING" id="63737.Npun_R4379"/>
<dbReference type="EnsemblBacteria" id="ACC82752">
    <property type="protein sequence ID" value="ACC82752"/>
    <property type="gene ID" value="Npun_R4379"/>
</dbReference>
<dbReference type="KEGG" id="npu:Npun_R4379"/>
<dbReference type="eggNOG" id="COG0198">
    <property type="taxonomic scope" value="Bacteria"/>
</dbReference>
<dbReference type="HOGENOM" id="CLU_093315_2_0_3"/>
<dbReference type="OrthoDB" id="9807419at2"/>
<dbReference type="PhylomeDB" id="B2ITP4"/>
<dbReference type="Proteomes" id="UP000001191">
    <property type="component" value="Chromosome"/>
</dbReference>
<dbReference type="GO" id="GO:1990904">
    <property type="term" value="C:ribonucleoprotein complex"/>
    <property type="evidence" value="ECO:0007669"/>
    <property type="project" value="UniProtKB-KW"/>
</dbReference>
<dbReference type="GO" id="GO:0005840">
    <property type="term" value="C:ribosome"/>
    <property type="evidence" value="ECO:0007669"/>
    <property type="project" value="UniProtKB-KW"/>
</dbReference>
<dbReference type="GO" id="GO:0019843">
    <property type="term" value="F:rRNA binding"/>
    <property type="evidence" value="ECO:0007669"/>
    <property type="project" value="UniProtKB-UniRule"/>
</dbReference>
<dbReference type="GO" id="GO:0003735">
    <property type="term" value="F:structural constituent of ribosome"/>
    <property type="evidence" value="ECO:0007669"/>
    <property type="project" value="InterPro"/>
</dbReference>
<dbReference type="GO" id="GO:0006412">
    <property type="term" value="P:translation"/>
    <property type="evidence" value="ECO:0007669"/>
    <property type="project" value="UniProtKB-UniRule"/>
</dbReference>
<dbReference type="CDD" id="cd06089">
    <property type="entry name" value="KOW_RPL26"/>
    <property type="match status" value="1"/>
</dbReference>
<dbReference type="FunFam" id="2.30.30.30:FF:000004">
    <property type="entry name" value="50S ribosomal protein L24"/>
    <property type="match status" value="1"/>
</dbReference>
<dbReference type="Gene3D" id="2.30.30.30">
    <property type="match status" value="1"/>
</dbReference>
<dbReference type="HAMAP" id="MF_01326_B">
    <property type="entry name" value="Ribosomal_uL24_B"/>
    <property type="match status" value="1"/>
</dbReference>
<dbReference type="InterPro" id="IPR005824">
    <property type="entry name" value="KOW"/>
</dbReference>
<dbReference type="InterPro" id="IPR014722">
    <property type="entry name" value="Rib_uL2_dom2"/>
</dbReference>
<dbReference type="InterPro" id="IPR003256">
    <property type="entry name" value="Ribosomal_uL24"/>
</dbReference>
<dbReference type="InterPro" id="IPR005825">
    <property type="entry name" value="Ribosomal_uL24_CS"/>
</dbReference>
<dbReference type="InterPro" id="IPR041988">
    <property type="entry name" value="Ribosomal_uL24_KOW"/>
</dbReference>
<dbReference type="InterPro" id="IPR008991">
    <property type="entry name" value="Translation_prot_SH3-like_sf"/>
</dbReference>
<dbReference type="NCBIfam" id="TIGR01079">
    <property type="entry name" value="rplX_bact"/>
    <property type="match status" value="1"/>
</dbReference>
<dbReference type="PANTHER" id="PTHR12903">
    <property type="entry name" value="MITOCHONDRIAL RIBOSOMAL PROTEIN L24"/>
    <property type="match status" value="1"/>
</dbReference>
<dbReference type="Pfam" id="PF00467">
    <property type="entry name" value="KOW"/>
    <property type="match status" value="1"/>
</dbReference>
<dbReference type="Pfam" id="PF17136">
    <property type="entry name" value="ribosomal_L24"/>
    <property type="match status" value="1"/>
</dbReference>
<dbReference type="SMART" id="SM00739">
    <property type="entry name" value="KOW"/>
    <property type="match status" value="1"/>
</dbReference>
<dbReference type="SUPFAM" id="SSF50104">
    <property type="entry name" value="Translation proteins SH3-like domain"/>
    <property type="match status" value="1"/>
</dbReference>
<dbReference type="PROSITE" id="PS01108">
    <property type="entry name" value="RIBOSOMAL_L24"/>
    <property type="match status" value="1"/>
</dbReference>
<keyword id="KW-1185">Reference proteome</keyword>
<keyword id="KW-0687">Ribonucleoprotein</keyword>
<keyword id="KW-0689">Ribosomal protein</keyword>
<keyword id="KW-0694">RNA-binding</keyword>
<keyword id="KW-0699">rRNA-binding</keyword>
<sequence length="117" mass="12945">MATKQGTPKVFHKMHVKTGDTVQVIAGKDKGKIGEIVQALPQLSKVIVKGVNIKTKHVKPQQEGESGRIVTQEFPIHSSNVMLYSTKQNVASRVCYTFTSEGKKVRKLKKTGEILDK</sequence>
<accession>B2ITP4</accession>
<name>RL24_NOSP7</name>
<proteinExistence type="inferred from homology"/>
<feature type="chain" id="PRO_0000355701" description="Large ribosomal subunit protein uL24">
    <location>
        <begin position="1"/>
        <end position="117"/>
    </location>
</feature>
<gene>
    <name evidence="1" type="primary">rplX</name>
    <name evidence="1" type="synonym">rpl24</name>
    <name type="ordered locus">Npun_R4379</name>
</gene>
<reference key="1">
    <citation type="journal article" date="2013" name="Plant Physiol.">
        <title>A Nostoc punctiforme Sugar Transporter Necessary to Establish a Cyanobacterium-Plant Symbiosis.</title>
        <authorList>
            <person name="Ekman M."/>
            <person name="Picossi S."/>
            <person name="Campbell E.L."/>
            <person name="Meeks J.C."/>
            <person name="Flores E."/>
        </authorList>
    </citation>
    <scope>NUCLEOTIDE SEQUENCE [LARGE SCALE GENOMIC DNA]</scope>
    <source>
        <strain>ATCC 29133 / PCC 73102</strain>
    </source>
</reference>